<evidence type="ECO:0000255" key="1">
    <source>
        <dbReference type="HAMAP-Rule" id="MF_01321"/>
    </source>
</evidence>
<protein>
    <recommendedName>
        <fullName evidence="1">DNA-directed RNA polymerase subunit beta</fullName>
        <shortName evidence="1">RNAP subunit beta</shortName>
        <ecNumber evidence="1">2.7.7.6</ecNumber>
    </recommendedName>
    <alternativeName>
        <fullName evidence="1">RNA polymerase subunit beta</fullName>
    </alternativeName>
    <alternativeName>
        <fullName evidence="1">Transcriptase subunit beta</fullName>
    </alternativeName>
</protein>
<feature type="chain" id="PRO_1000214488" description="DNA-directed RNA polymerase subunit beta">
    <location>
        <begin position="1"/>
        <end position="1188"/>
    </location>
</feature>
<sequence length="1188" mass="132966">MAGHDVQYGKHRTRRSFSRIKEVLDLPNLIEIQTDSFQDFLDSGLKEVFEDVLPISNFTDTMELEFVGYEFKEPKYTLEEARIHDASYSAPIFVTFRLINKETGEIKTQEVFFGDFPIMTEMGTFIINGGERIIVSQLVRSPGVYFNDKVDKNGKVGYGSTVIPNRGAWLELETDSKDIAYTRIDRTRKIPFTTLVRALGFSGDDEIIDIFGDSELVRNTIEKDIHKNQSDSRTDEALKEIYERLRPGEPKTADSSRSLLTARFFDARRYDLAAVGRYKINKKLNIKTRLLNQIIAENLIDSETGEILVEAGTEMTRSVIESIEEQLDGDLNKFVYTPNDYAVVTEPVILQKFKVVSPVDPDRVVTIVGNANPDDKVRALTPADILAEMSYFLNLAEGLGKVDDIDHLGNRRIRAVGELLANQFRIGLARMERNVRERMSVQDNDVLTPQQIINIRPVTAAVKEFFGSSQLSQFMDQHNPLSELSHKRRLSALGPGGLTRDRAGYEVRDVHYTHYGRMCPIETPEGPNIGLINNLSSFGHLNKYGFIQTPYRKVDRVIGRVTNEIVWLTADEEDEFTVAQANSKLNPDGTFAEEIVMGRHQGNNQEFPASQVDFVDVSPKQVVAVATACIPFLENDDSNRALMGANMQRQAVPLIDPKAPYVGTGMEYQAAHDSGAAVIAQHNGKVVFSDAERVEVRREDGSLDVYHITKFRRSNSGTAYNQRTLVKIGDIVEKGDFIADGPSMEKGEMALGQNPIVAYMTWEGYNFEDAVIMSERLVKEDVYTSVHLEEFESETRDTKLGPEEITREVPNVGEEALKDLDEMGIIRIGAEVKEGDILVGKVTPKGEKDLSAEERLLHAIFGDKSREVRDTSLRVPHGGDGIVRDVKIFTRANGDELQSGVNMLVRVYIAQKRKIKVGDKMAGRHGNKGVVSRIVPVEDMPYLPDGTPVDIMLNPLGVPSRMNIGQVMELHLGMAARNLGIHIATPVFDGATSEDLWETVREAGMDSDAKTVLYDGRTGEPFDNRVSVGVMYMIKLHHMVDDKLHARSVGPYSLVTQQPLGGKAQFGGQRFGEMEVWALEAYGASNVLQEILTYKSDDVNGRLKAYEAITKGKPIPKPGVPESFRVLVKELQSLGLDMRVLDEDDNEVELRDLDEGEDDDVMHVDDLEKAREKQAQETQEIAESTEDN</sequence>
<organism>
    <name type="scientific">Streptococcus equi subsp. zooepidemicus (strain H70)</name>
    <dbReference type="NCBI Taxonomy" id="553483"/>
    <lineage>
        <taxon>Bacteria</taxon>
        <taxon>Bacillati</taxon>
        <taxon>Bacillota</taxon>
        <taxon>Bacilli</taxon>
        <taxon>Lactobacillales</taxon>
        <taxon>Streptococcaceae</taxon>
        <taxon>Streptococcus</taxon>
    </lineage>
</organism>
<keyword id="KW-0240">DNA-directed RNA polymerase</keyword>
<keyword id="KW-0548">Nucleotidyltransferase</keyword>
<keyword id="KW-0804">Transcription</keyword>
<keyword id="KW-0808">Transferase</keyword>
<dbReference type="EC" id="2.7.7.6" evidence="1"/>
<dbReference type="EMBL" id="FM204884">
    <property type="protein sequence ID" value="CAW97721.1"/>
    <property type="molecule type" value="Genomic_DNA"/>
</dbReference>
<dbReference type="SMR" id="C0MEE3"/>
<dbReference type="KEGG" id="seq:SZO_00930"/>
<dbReference type="eggNOG" id="COG0085">
    <property type="taxonomic scope" value="Bacteria"/>
</dbReference>
<dbReference type="HOGENOM" id="CLU_000524_4_1_9"/>
<dbReference type="Proteomes" id="UP000001368">
    <property type="component" value="Chromosome"/>
</dbReference>
<dbReference type="GO" id="GO:0000428">
    <property type="term" value="C:DNA-directed RNA polymerase complex"/>
    <property type="evidence" value="ECO:0007669"/>
    <property type="project" value="UniProtKB-KW"/>
</dbReference>
<dbReference type="GO" id="GO:0003677">
    <property type="term" value="F:DNA binding"/>
    <property type="evidence" value="ECO:0007669"/>
    <property type="project" value="UniProtKB-UniRule"/>
</dbReference>
<dbReference type="GO" id="GO:0003899">
    <property type="term" value="F:DNA-directed RNA polymerase activity"/>
    <property type="evidence" value="ECO:0007669"/>
    <property type="project" value="UniProtKB-UniRule"/>
</dbReference>
<dbReference type="GO" id="GO:0032549">
    <property type="term" value="F:ribonucleoside binding"/>
    <property type="evidence" value="ECO:0007669"/>
    <property type="project" value="InterPro"/>
</dbReference>
<dbReference type="GO" id="GO:0006351">
    <property type="term" value="P:DNA-templated transcription"/>
    <property type="evidence" value="ECO:0007669"/>
    <property type="project" value="UniProtKB-UniRule"/>
</dbReference>
<dbReference type="CDD" id="cd00653">
    <property type="entry name" value="RNA_pol_B_RPB2"/>
    <property type="match status" value="1"/>
</dbReference>
<dbReference type="Gene3D" id="2.40.50.100">
    <property type="match status" value="1"/>
</dbReference>
<dbReference type="Gene3D" id="2.40.50.150">
    <property type="match status" value="1"/>
</dbReference>
<dbReference type="Gene3D" id="3.90.1100.10">
    <property type="match status" value="2"/>
</dbReference>
<dbReference type="Gene3D" id="2.30.150.10">
    <property type="entry name" value="DNA-directed RNA polymerase, beta subunit, external 1 domain"/>
    <property type="match status" value="1"/>
</dbReference>
<dbReference type="Gene3D" id="2.40.270.10">
    <property type="entry name" value="DNA-directed RNA polymerase, subunit 2, domain 6"/>
    <property type="match status" value="1"/>
</dbReference>
<dbReference type="Gene3D" id="3.90.1800.10">
    <property type="entry name" value="RNA polymerase alpha subunit dimerisation domain"/>
    <property type="match status" value="1"/>
</dbReference>
<dbReference type="Gene3D" id="3.90.1110.10">
    <property type="entry name" value="RNA polymerase Rpb2, domain 2"/>
    <property type="match status" value="1"/>
</dbReference>
<dbReference type="HAMAP" id="MF_01321">
    <property type="entry name" value="RNApol_bact_RpoB"/>
    <property type="match status" value="1"/>
</dbReference>
<dbReference type="InterPro" id="IPR042107">
    <property type="entry name" value="DNA-dir_RNA_pol_bsu_ext_1_sf"/>
</dbReference>
<dbReference type="InterPro" id="IPR019462">
    <property type="entry name" value="DNA-dir_RNA_pol_bsu_external_1"/>
</dbReference>
<dbReference type="InterPro" id="IPR015712">
    <property type="entry name" value="DNA-dir_RNA_pol_su2"/>
</dbReference>
<dbReference type="InterPro" id="IPR007120">
    <property type="entry name" value="DNA-dir_RNAP_su2_dom"/>
</dbReference>
<dbReference type="InterPro" id="IPR037033">
    <property type="entry name" value="DNA-dir_RNAP_su2_hyb_sf"/>
</dbReference>
<dbReference type="InterPro" id="IPR010243">
    <property type="entry name" value="RNA_pol_bsu_bac"/>
</dbReference>
<dbReference type="InterPro" id="IPR007121">
    <property type="entry name" value="RNA_pol_bsu_CS"/>
</dbReference>
<dbReference type="InterPro" id="IPR007644">
    <property type="entry name" value="RNA_pol_bsu_protrusion"/>
</dbReference>
<dbReference type="InterPro" id="IPR007642">
    <property type="entry name" value="RNA_pol_Rpb2_2"/>
</dbReference>
<dbReference type="InterPro" id="IPR037034">
    <property type="entry name" value="RNA_pol_Rpb2_2_sf"/>
</dbReference>
<dbReference type="InterPro" id="IPR007645">
    <property type="entry name" value="RNA_pol_Rpb2_3"/>
</dbReference>
<dbReference type="InterPro" id="IPR007641">
    <property type="entry name" value="RNA_pol_Rpb2_7"/>
</dbReference>
<dbReference type="InterPro" id="IPR014724">
    <property type="entry name" value="RNA_pol_RPB2_OB-fold"/>
</dbReference>
<dbReference type="NCBIfam" id="NF001616">
    <property type="entry name" value="PRK00405.1"/>
    <property type="match status" value="1"/>
</dbReference>
<dbReference type="NCBIfam" id="TIGR02013">
    <property type="entry name" value="rpoB"/>
    <property type="match status" value="1"/>
</dbReference>
<dbReference type="PANTHER" id="PTHR20856">
    <property type="entry name" value="DNA-DIRECTED RNA POLYMERASE I SUBUNIT 2"/>
    <property type="match status" value="1"/>
</dbReference>
<dbReference type="Pfam" id="PF04563">
    <property type="entry name" value="RNA_pol_Rpb2_1"/>
    <property type="match status" value="1"/>
</dbReference>
<dbReference type="Pfam" id="PF04561">
    <property type="entry name" value="RNA_pol_Rpb2_2"/>
    <property type="match status" value="2"/>
</dbReference>
<dbReference type="Pfam" id="PF04565">
    <property type="entry name" value="RNA_pol_Rpb2_3"/>
    <property type="match status" value="1"/>
</dbReference>
<dbReference type="Pfam" id="PF10385">
    <property type="entry name" value="RNA_pol_Rpb2_45"/>
    <property type="match status" value="1"/>
</dbReference>
<dbReference type="Pfam" id="PF00562">
    <property type="entry name" value="RNA_pol_Rpb2_6"/>
    <property type="match status" value="1"/>
</dbReference>
<dbReference type="Pfam" id="PF04560">
    <property type="entry name" value="RNA_pol_Rpb2_7"/>
    <property type="match status" value="1"/>
</dbReference>
<dbReference type="SUPFAM" id="SSF64484">
    <property type="entry name" value="beta and beta-prime subunits of DNA dependent RNA-polymerase"/>
    <property type="match status" value="1"/>
</dbReference>
<dbReference type="PROSITE" id="PS01166">
    <property type="entry name" value="RNA_POL_BETA"/>
    <property type="match status" value="1"/>
</dbReference>
<name>RPOB_STRS7</name>
<proteinExistence type="inferred from homology"/>
<accession>C0MEE3</accession>
<reference key="1">
    <citation type="journal article" date="2009" name="PLoS Pathog.">
        <title>Genomic evidence for the evolution of Streptococcus equi: host restriction, increased virulence, and genetic exchange with human pathogens.</title>
        <authorList>
            <person name="Holden M.T.G."/>
            <person name="Heather Z."/>
            <person name="Paillot R."/>
            <person name="Steward K.F."/>
            <person name="Webb K."/>
            <person name="Ainslie F."/>
            <person name="Jourdan T."/>
            <person name="Bason N.C."/>
            <person name="Holroyd N.E."/>
            <person name="Mungall K."/>
            <person name="Quail M.A."/>
            <person name="Sanders M."/>
            <person name="Simmonds M."/>
            <person name="Willey D."/>
            <person name="Brooks K."/>
            <person name="Aanensen D.M."/>
            <person name="Spratt B.G."/>
            <person name="Jolley K.A."/>
            <person name="Maiden M.C.J."/>
            <person name="Kehoe M."/>
            <person name="Chanter N."/>
            <person name="Bentley S.D."/>
            <person name="Robinson C."/>
            <person name="Maskell D.J."/>
            <person name="Parkhill J."/>
            <person name="Waller A.S."/>
        </authorList>
    </citation>
    <scope>NUCLEOTIDE SEQUENCE [LARGE SCALE GENOMIC DNA]</scope>
    <source>
        <strain>H70</strain>
    </source>
</reference>
<gene>
    <name evidence="1" type="primary">rpoB</name>
    <name type="ordered locus">SZO_00930</name>
</gene>
<comment type="function">
    <text evidence="1">DNA-dependent RNA polymerase catalyzes the transcription of DNA into RNA using the four ribonucleoside triphosphates as substrates.</text>
</comment>
<comment type="catalytic activity">
    <reaction evidence="1">
        <text>RNA(n) + a ribonucleoside 5'-triphosphate = RNA(n+1) + diphosphate</text>
        <dbReference type="Rhea" id="RHEA:21248"/>
        <dbReference type="Rhea" id="RHEA-COMP:14527"/>
        <dbReference type="Rhea" id="RHEA-COMP:17342"/>
        <dbReference type="ChEBI" id="CHEBI:33019"/>
        <dbReference type="ChEBI" id="CHEBI:61557"/>
        <dbReference type="ChEBI" id="CHEBI:140395"/>
        <dbReference type="EC" id="2.7.7.6"/>
    </reaction>
</comment>
<comment type="subunit">
    <text evidence="1">The RNAP catalytic core consists of 2 alpha, 1 beta, 1 beta' and 1 omega subunit. When a sigma factor is associated with the core the holoenzyme is formed, which can initiate transcription.</text>
</comment>
<comment type="similarity">
    <text evidence="1">Belongs to the RNA polymerase beta chain family.</text>
</comment>